<feature type="initiator methionine" description="Removed" evidence="2">
    <location>
        <position position="1"/>
    </location>
</feature>
<feature type="chain" id="PRO_0000212127" description="2,3-bisphosphoglycerate-independent phosphoglycerate mutase">
    <location>
        <begin position="2"/>
        <end position="511"/>
    </location>
</feature>
<feature type="active site" description="Phosphoserine intermediate" evidence="3 4 5">
    <location>
        <position position="62"/>
    </location>
</feature>
<feature type="binding site" evidence="3 4">
    <location>
        <position position="12"/>
    </location>
    <ligand>
        <name>Mn(2+)</name>
        <dbReference type="ChEBI" id="CHEBI:29035"/>
        <label>2</label>
    </ligand>
</feature>
<feature type="binding site" evidence="3 4">
    <location>
        <position position="62"/>
    </location>
    <ligand>
        <name>Mn(2+)</name>
        <dbReference type="ChEBI" id="CHEBI:29035"/>
        <label>2</label>
    </ligand>
</feature>
<feature type="binding site" evidence="3 4 5">
    <location>
        <position position="123"/>
    </location>
    <ligand>
        <name>substrate</name>
    </ligand>
</feature>
<feature type="binding site" evidence="3 4 5">
    <location>
        <begin position="153"/>
        <end position="154"/>
    </location>
    <ligand>
        <name>substrate</name>
    </ligand>
</feature>
<feature type="binding site" evidence="3 4 5">
    <location>
        <position position="185"/>
    </location>
    <ligand>
        <name>substrate</name>
    </ligand>
</feature>
<feature type="binding site" evidence="3 4">
    <location>
        <position position="191"/>
    </location>
    <ligand>
        <name>substrate</name>
    </ligand>
</feature>
<feature type="binding site" evidence="3 4 5">
    <location>
        <begin position="261"/>
        <end position="264"/>
    </location>
    <ligand>
        <name>substrate</name>
    </ligand>
</feature>
<feature type="binding site" evidence="3 5">
    <location>
        <position position="336"/>
    </location>
    <ligand>
        <name>substrate</name>
    </ligand>
</feature>
<feature type="binding site" evidence="3 4 5">
    <location>
        <position position="403"/>
    </location>
    <ligand>
        <name>Mn(2+)</name>
        <dbReference type="ChEBI" id="CHEBI:29035"/>
        <label>1</label>
    </ligand>
</feature>
<feature type="binding site" evidence="3 4 5">
    <location>
        <position position="407"/>
    </location>
    <ligand>
        <name>Mn(2+)</name>
        <dbReference type="ChEBI" id="CHEBI:29035"/>
        <label>1</label>
    </ligand>
</feature>
<feature type="binding site" evidence="3 4">
    <location>
        <position position="444"/>
    </location>
    <ligand>
        <name>Mn(2+)</name>
        <dbReference type="ChEBI" id="CHEBI:29035"/>
        <label>2</label>
    </ligand>
</feature>
<feature type="binding site" evidence="3 4">
    <location>
        <position position="445"/>
    </location>
    <ligand>
        <name>Mn(2+)</name>
        <dbReference type="ChEBI" id="CHEBI:29035"/>
        <label>2</label>
    </ligand>
</feature>
<feature type="binding site" evidence="3 4 5">
    <location>
        <position position="462"/>
    </location>
    <ligand>
        <name>Mn(2+)</name>
        <dbReference type="ChEBI" id="CHEBI:29035"/>
        <label>1</label>
    </ligand>
</feature>
<feature type="modified residue" description="Phosphotyrosine" evidence="1">
    <location>
        <position position="36"/>
    </location>
</feature>
<feature type="mutagenesis site" description="Loss of mutase activity." evidence="3">
    <original>D</original>
    <variation>N</variation>
    <location>
        <position position="12"/>
    </location>
</feature>
<feature type="mutagenesis site" description="Decrease in activity." evidence="3">
    <original>H</original>
    <variation>N</variation>
    <location>
        <position position="42"/>
    </location>
</feature>
<feature type="mutagenesis site" description="Loss of mutase activity." evidence="3 5">
    <original>S</original>
    <variation>A</variation>
    <location>
        <position position="62"/>
    </location>
</feature>
<feature type="mutagenesis site" description="Strong decrease in the mutase activity." evidence="3">
    <original>H</original>
    <variation>N</variation>
    <location>
        <position position="66"/>
    </location>
</feature>
<feature type="mutagenesis site" description="Strong decrease in the mutase activity." evidence="3">
    <original>H</original>
    <variation>N</variation>
    <location>
        <position position="123"/>
    </location>
</feature>
<feature type="mutagenesis site" description="Decrease in activity." evidence="3">
    <original>H</original>
    <variation>N</variation>
    <location>
        <position position="125"/>
    </location>
</feature>
<feature type="mutagenesis site" description="5-fold decrease in activity." evidence="3">
    <original>H</original>
    <variation>N</variation>
    <location>
        <position position="128"/>
    </location>
</feature>
<feature type="mutagenesis site" description="Loss of mutase activity." evidence="3">
    <original>R</original>
    <variation>L</variation>
    <location>
        <position position="261"/>
    </location>
</feature>
<feature type="mutagenesis site" description="Loss of mutase activity." evidence="3">
    <original>H</original>
    <variation>N</variation>
    <location>
        <position position="407"/>
    </location>
</feature>
<feature type="mutagenesis site" description="5-fold decrease in the mutase activity." evidence="3">
    <original>H</original>
    <variation>N</variation>
    <location>
        <position position="445"/>
    </location>
</feature>
<feature type="mutagenesis site" description="Strong decrease in the mutase activity." evidence="3">
    <original>H</original>
    <variation>N</variation>
    <location>
        <position position="462"/>
    </location>
</feature>
<feature type="strand" evidence="11">
    <location>
        <begin position="6"/>
        <end position="11"/>
    </location>
</feature>
<feature type="helix" evidence="11">
    <location>
        <begin position="24"/>
        <end position="27"/>
    </location>
</feature>
<feature type="helix" evidence="11">
    <location>
        <begin position="31"/>
        <end position="39"/>
    </location>
</feature>
<feature type="strand" evidence="11">
    <location>
        <begin position="42"/>
        <end position="46"/>
    </location>
</feature>
<feature type="helix" evidence="11">
    <location>
        <begin position="49"/>
        <end position="52"/>
    </location>
</feature>
<feature type="helix" evidence="11">
    <location>
        <begin position="62"/>
        <end position="71"/>
    </location>
</feature>
<feature type="helix" evidence="11">
    <location>
        <begin position="78"/>
        <end position="87"/>
    </location>
</feature>
<feature type="helix" evidence="11">
    <location>
        <begin position="91"/>
        <end position="93"/>
    </location>
</feature>
<feature type="helix" evidence="11">
    <location>
        <begin position="95"/>
        <end position="107"/>
    </location>
</feature>
<feature type="strand" evidence="11">
    <location>
        <begin position="111"/>
        <end position="116"/>
    </location>
</feature>
<feature type="helix" evidence="11">
    <location>
        <begin position="126"/>
        <end position="138"/>
    </location>
</feature>
<feature type="strand" evidence="11">
    <location>
        <begin position="144"/>
        <end position="150"/>
    </location>
</feature>
<feature type="strand" evidence="11">
    <location>
        <begin position="152"/>
        <end position="155"/>
    </location>
</feature>
<feature type="helix" evidence="11">
    <location>
        <begin position="160"/>
        <end position="174"/>
    </location>
</feature>
<feature type="strand" evidence="11">
    <location>
        <begin position="178"/>
        <end position="184"/>
    </location>
</feature>
<feature type="helix" evidence="11">
    <location>
        <begin position="185"/>
        <end position="188"/>
    </location>
</feature>
<feature type="helix" evidence="11">
    <location>
        <begin position="195"/>
        <end position="207"/>
    </location>
</feature>
<feature type="strand" evidence="11">
    <location>
        <begin position="212"/>
        <end position="215"/>
    </location>
</feature>
<feature type="helix" evidence="11">
    <location>
        <begin position="216"/>
        <end position="225"/>
    </location>
</feature>
<feature type="helix" evidence="11">
    <location>
        <begin position="230"/>
        <end position="232"/>
    </location>
</feature>
<feature type="strand" evidence="11">
    <location>
        <begin position="236"/>
        <end position="239"/>
    </location>
</feature>
<feature type="strand" evidence="11">
    <location>
        <begin position="243"/>
        <end position="246"/>
    </location>
</feature>
<feature type="strand" evidence="11">
    <location>
        <begin position="254"/>
        <end position="257"/>
    </location>
</feature>
<feature type="turn" evidence="11">
    <location>
        <begin position="263"/>
        <end position="265"/>
    </location>
</feature>
<feature type="helix" evidence="11">
    <location>
        <begin position="266"/>
        <end position="273"/>
    </location>
</feature>
<feature type="strand" evidence="11">
    <location>
        <begin position="291"/>
        <end position="296"/>
    </location>
</feature>
<feature type="strand" evidence="10">
    <location>
        <begin position="300"/>
        <end position="302"/>
    </location>
</feature>
<feature type="strand" evidence="11">
    <location>
        <begin position="304"/>
        <end position="308"/>
    </location>
</feature>
<feature type="helix" evidence="11">
    <location>
        <begin position="317"/>
        <end position="323"/>
    </location>
</feature>
<feature type="strand" evidence="11">
    <location>
        <begin position="328"/>
        <end position="333"/>
    </location>
</feature>
<feature type="helix" evidence="11">
    <location>
        <begin position="334"/>
        <end position="336"/>
    </location>
</feature>
<feature type="helix" evidence="11">
    <location>
        <begin position="337"/>
        <end position="340"/>
    </location>
</feature>
<feature type="turn" evidence="11">
    <location>
        <begin position="341"/>
        <end position="346"/>
    </location>
</feature>
<feature type="strand" evidence="11">
    <location>
        <begin position="355"/>
        <end position="360"/>
    </location>
</feature>
<feature type="helix" evidence="11">
    <location>
        <begin position="368"/>
        <end position="370"/>
    </location>
</feature>
<feature type="turn" evidence="11">
    <location>
        <begin position="372"/>
        <end position="375"/>
    </location>
</feature>
<feature type="helix" evidence="11">
    <location>
        <begin position="376"/>
        <end position="388"/>
    </location>
</feature>
<feature type="strand" evidence="11">
    <location>
        <begin position="393"/>
        <end position="399"/>
    </location>
</feature>
<feature type="helix" evidence="11">
    <location>
        <begin position="401"/>
        <end position="406"/>
    </location>
</feature>
<feature type="turn" evidence="11">
    <location>
        <begin position="407"/>
        <end position="409"/>
    </location>
</feature>
<feature type="helix" evidence="11">
    <location>
        <begin position="411"/>
        <end position="434"/>
    </location>
</feature>
<feature type="strand" evidence="11">
    <location>
        <begin position="438"/>
        <end position="442"/>
    </location>
</feature>
<feature type="strand" evidence="11">
    <location>
        <begin position="444"/>
        <end position="447"/>
    </location>
</feature>
<feature type="strand" evidence="11">
    <location>
        <begin position="467"/>
        <end position="471"/>
    </location>
</feature>
<feature type="strand" evidence="11">
    <location>
        <begin position="480"/>
        <end position="483"/>
    </location>
</feature>
<feature type="helix" evidence="11">
    <location>
        <begin position="484"/>
        <end position="486"/>
    </location>
</feature>
<feature type="helix" evidence="11">
    <location>
        <begin position="487"/>
        <end position="495"/>
    </location>
</feature>
<accession>Q9X519</accession>
<reference key="1">
    <citation type="journal article" date="1999" name="J. Struct. Biol.">
        <title>Structural studies on a 2,3-diphosphoglycerate independent phosphoglycerate mutase from Bacillus stearothermophilus.</title>
        <authorList>
            <person name="Chander M."/>
            <person name="Setlow P."/>
            <person name="Lamani E."/>
            <person name="Jedrzejas M.J."/>
        </authorList>
    </citation>
    <scope>NUCLEOTIDE SEQUENCE [GENOMIC DNA]</scope>
    <scope>PROTEIN SEQUENCE OF 2-8</scope>
    <scope>FUNCTION</scope>
    <scope>CATALYTIC ACTIVITY</scope>
    <scope>BIOPHYSICOCHEMICAL PROPERTIES</scope>
    <scope>COFACTOR</scope>
    <scope>MASS SPECTROMETRY</scope>
    <scope>CRYSTALLIZATION</scope>
    <scope>SUBUNIT</scope>
</reference>
<reference key="2">
    <citation type="journal article" date="2000" name="EMBO J.">
        <title>Structure and mechanism of action of a novel phosphoglycerate mutase from Bacillus stearothermophilus.</title>
        <authorList>
            <person name="Jedrzejas M.J."/>
            <person name="Chander M."/>
            <person name="Setlow P."/>
            <person name="Krishnasamy G."/>
        </authorList>
    </citation>
    <scope>X-RAY CRYSTALLOGRAPHY (1.9 ANGSTROMS) IN COMPLEX WITH SUBSTRATE AND MANGANESE</scope>
    <scope>FUNCTION</scope>
    <scope>MUTAGENESIS OF ASP-12; HIS-42; SER-62; HIS-66; HIS-123; HIS-125; HIS-128; ARG-261; HIS-407 AND HIS-445</scope>
    <scope>COFACTOR</scope>
    <scope>ACTIVE SITE</scope>
    <scope>REACTION MECHANISM</scope>
</reference>
<reference key="3">
    <citation type="journal article" date="2000" name="J. Biol. Chem.">
        <title>Mechanism of catalysis of the cofactor-independent phosphoglycerate mutase from Bacillus stearothermophilus. Crystal structure of the complex with 2-phosphoglycerate.</title>
        <authorList>
            <person name="Jedrzejas M.J."/>
            <person name="Chander M."/>
            <person name="Setlow P."/>
            <person name="Krishnasamy G."/>
        </authorList>
    </citation>
    <scope>X-RAY CRYSTALLOGRAPHY (1.7 ANGSTROMS) IN COMPLEX WITH SUBSTRATE AND MANGANESE</scope>
    <scope>COFACTOR</scope>
</reference>
<reference key="4">
    <citation type="journal article" date="2003" name="J. Mol. Biol.">
        <title>Insights into the catalytic mechanism of cofactor-independent phosphoglycerate mutase from X-ray crystallography, simulated dynamics and molecular modeling.</title>
        <authorList>
            <person name="Rigden D.J."/>
            <person name="Lamani E."/>
            <person name="Mello L.V."/>
            <person name="Littlejohn J.E."/>
            <person name="Jedrzejas M.J."/>
        </authorList>
    </citation>
    <scope>X-RAY CRYSTALLOGRAPHY (1.40 ANGSTROMS) OF WILD-TYPE AND MUTANT ALA-62 IN COMPLEX WITH SUBSTRATE AND MANGANESE</scope>
    <scope>MUTAGENESIS OF SER-62</scope>
    <scope>COFACTOR</scope>
    <scope>ACTIVE SITE</scope>
</reference>
<keyword id="KW-0002">3D-structure</keyword>
<keyword id="KW-0903">Direct protein sequencing</keyword>
<keyword id="KW-0324">Glycolysis</keyword>
<keyword id="KW-0413">Isomerase</keyword>
<keyword id="KW-0464">Manganese</keyword>
<keyword id="KW-0479">Metal-binding</keyword>
<keyword id="KW-0597">Phosphoprotein</keyword>
<keyword id="KW-0749">Sporulation</keyword>
<comment type="function">
    <text evidence="2 3">Essential for rapid growth and for sporulation. Catalyzes the interconversion of 2-phosphoglycerate (2-PGA) and 3-phosphoglycerate (3-PGA).</text>
</comment>
<comment type="catalytic activity">
    <reaction evidence="2">
        <text>(2R)-2-phosphoglycerate = (2R)-3-phosphoglycerate</text>
        <dbReference type="Rhea" id="RHEA:15901"/>
        <dbReference type="ChEBI" id="CHEBI:58272"/>
        <dbReference type="ChEBI" id="CHEBI:58289"/>
        <dbReference type="EC" id="5.4.2.12"/>
    </reaction>
</comment>
<comment type="cofactor">
    <cofactor evidence="2 3 4 5">
        <name>Mn(2+)</name>
        <dbReference type="ChEBI" id="CHEBI:29035"/>
    </cofactor>
    <text evidence="2 3 4 5">Binds 2 manganese ions per subunit.</text>
</comment>
<comment type="activity regulation">
    <text evidence="8">Could be inhibited during sporulation by acidification of the forespore, thus allowing accumulation of the spore's large depot of 3-phosphoglyceric acid.</text>
</comment>
<comment type="biophysicochemical properties">
    <kinetics>
        <KM evidence="2">4.4 mM for 3-pGA</KM>
    </kinetics>
    <phDependence>
        <text evidence="2">Very sensitive to pH. The enzyme activity rises 25-fold between pH 6 and 8.</text>
    </phDependence>
    <temperatureDependence>
        <text evidence="2">Addition of manganese increases the thermal stability.</text>
    </temperatureDependence>
</comment>
<comment type="pathway">
    <text evidence="7">Carbohydrate degradation; glycolysis; pyruvate from D-glyceraldehyde 3-phosphate: step 3/5.</text>
</comment>
<comment type="subunit">
    <text evidence="2">Monomer.</text>
</comment>
<comment type="mass spectrometry"/>
<comment type="miscellaneous">
    <text evidence="9">The pH sensitivity is physiologically relevant, since it allows for the regulation of iPGM activity during different parts of the developmental cycle.</text>
</comment>
<comment type="similarity">
    <text evidence="7">Belongs to the BPG-independent phosphoglycerate mutase family.</text>
</comment>
<dbReference type="EC" id="5.4.2.12" evidence="2"/>
<dbReference type="EMBL" id="AF120091">
    <property type="protein sequence ID" value="AAD26328.1"/>
    <property type="molecule type" value="Genomic_DNA"/>
</dbReference>
<dbReference type="PIR" id="T46865">
    <property type="entry name" value="T46865"/>
</dbReference>
<dbReference type="RefSeq" id="WP_033015095.1">
    <property type="nucleotide sequence ID" value="NZ_CBCSGJ010000015.1"/>
</dbReference>
<dbReference type="PDB" id="1EJJ">
    <property type="method" value="X-ray"/>
    <property type="resolution" value="1.90 A"/>
    <property type="chains" value="A=1-511"/>
</dbReference>
<dbReference type="PDB" id="1EQJ">
    <property type="method" value="X-ray"/>
    <property type="resolution" value="1.70 A"/>
    <property type="chains" value="A=1-511"/>
</dbReference>
<dbReference type="PDB" id="1O98">
    <property type="method" value="X-ray"/>
    <property type="resolution" value="1.40 A"/>
    <property type="chains" value="A=1-511"/>
</dbReference>
<dbReference type="PDB" id="1O99">
    <property type="method" value="X-ray"/>
    <property type="resolution" value="2.65 A"/>
    <property type="chains" value="A=1-511"/>
</dbReference>
<dbReference type="PDBsum" id="1EJJ"/>
<dbReference type="PDBsum" id="1EQJ"/>
<dbReference type="PDBsum" id="1O98"/>
<dbReference type="PDBsum" id="1O99"/>
<dbReference type="SMR" id="Q9X519"/>
<dbReference type="DrugBank" id="DB01709">
    <property type="generic name" value="2-phospho-D-glyceric acid"/>
</dbReference>
<dbReference type="DrugBank" id="DB04510">
    <property type="generic name" value="3-phospho-D-glyceric acid"/>
</dbReference>
<dbReference type="GeneID" id="89613288"/>
<dbReference type="KEGG" id="ag:AAD26328"/>
<dbReference type="OrthoDB" id="9800863at2"/>
<dbReference type="BRENDA" id="5.4.2.12">
    <property type="organism ID" value="623"/>
</dbReference>
<dbReference type="SABIO-RK" id="Q9X519"/>
<dbReference type="UniPathway" id="UPA00109">
    <property type="reaction ID" value="UER00186"/>
</dbReference>
<dbReference type="EvolutionaryTrace" id="Q9X519"/>
<dbReference type="GO" id="GO:0005829">
    <property type="term" value="C:cytosol"/>
    <property type="evidence" value="ECO:0007669"/>
    <property type="project" value="TreeGrafter"/>
</dbReference>
<dbReference type="GO" id="GO:0030145">
    <property type="term" value="F:manganese ion binding"/>
    <property type="evidence" value="ECO:0000314"/>
    <property type="project" value="UniProtKB"/>
</dbReference>
<dbReference type="GO" id="GO:0004619">
    <property type="term" value="F:phosphoglycerate mutase activity"/>
    <property type="evidence" value="ECO:0000314"/>
    <property type="project" value="UniProtKB"/>
</dbReference>
<dbReference type="GO" id="GO:0006007">
    <property type="term" value="P:glucose catabolic process"/>
    <property type="evidence" value="ECO:0007669"/>
    <property type="project" value="InterPro"/>
</dbReference>
<dbReference type="GO" id="GO:0006096">
    <property type="term" value="P:glycolytic process"/>
    <property type="evidence" value="ECO:0007669"/>
    <property type="project" value="UniProtKB-UniRule"/>
</dbReference>
<dbReference type="GO" id="GO:0043937">
    <property type="term" value="P:regulation of sporulation"/>
    <property type="evidence" value="ECO:0000314"/>
    <property type="project" value="UniProtKB"/>
</dbReference>
<dbReference type="GO" id="GO:0030435">
    <property type="term" value="P:sporulation resulting in formation of a cellular spore"/>
    <property type="evidence" value="ECO:0007669"/>
    <property type="project" value="UniProtKB-KW"/>
</dbReference>
<dbReference type="CDD" id="cd16010">
    <property type="entry name" value="iPGM"/>
    <property type="match status" value="1"/>
</dbReference>
<dbReference type="FunFam" id="3.40.1450.10:FF:000001">
    <property type="entry name" value="2,3-bisphosphoglycerate-independent phosphoglycerate mutase"/>
    <property type="match status" value="1"/>
</dbReference>
<dbReference type="FunFam" id="3.40.720.10:FF:000001">
    <property type="entry name" value="2,3-bisphosphoglycerate-independent phosphoglycerate mutase"/>
    <property type="match status" value="1"/>
</dbReference>
<dbReference type="Gene3D" id="3.40.720.10">
    <property type="entry name" value="Alkaline Phosphatase, subunit A"/>
    <property type="match status" value="1"/>
</dbReference>
<dbReference type="Gene3D" id="3.40.1450.10">
    <property type="entry name" value="BPG-independent phosphoglycerate mutase, domain B"/>
    <property type="match status" value="1"/>
</dbReference>
<dbReference type="HAMAP" id="MF_01038">
    <property type="entry name" value="GpmI"/>
    <property type="match status" value="1"/>
</dbReference>
<dbReference type="InterPro" id="IPR017850">
    <property type="entry name" value="Alkaline_phosphatase_core_sf"/>
</dbReference>
<dbReference type="InterPro" id="IPR011258">
    <property type="entry name" value="BPG-indep_PGM_N"/>
</dbReference>
<dbReference type="InterPro" id="IPR006124">
    <property type="entry name" value="Metalloenzyme"/>
</dbReference>
<dbReference type="InterPro" id="IPR036646">
    <property type="entry name" value="PGAM_B_sf"/>
</dbReference>
<dbReference type="InterPro" id="IPR005995">
    <property type="entry name" value="Pgm_bpd_ind"/>
</dbReference>
<dbReference type="NCBIfam" id="TIGR01307">
    <property type="entry name" value="pgm_bpd_ind"/>
    <property type="match status" value="1"/>
</dbReference>
<dbReference type="PANTHER" id="PTHR31637">
    <property type="entry name" value="2,3-BISPHOSPHOGLYCERATE-INDEPENDENT PHOSPHOGLYCERATE MUTASE"/>
    <property type="match status" value="1"/>
</dbReference>
<dbReference type="PANTHER" id="PTHR31637:SF0">
    <property type="entry name" value="2,3-BISPHOSPHOGLYCERATE-INDEPENDENT PHOSPHOGLYCERATE MUTASE"/>
    <property type="match status" value="1"/>
</dbReference>
<dbReference type="Pfam" id="PF06415">
    <property type="entry name" value="iPGM_N"/>
    <property type="match status" value="1"/>
</dbReference>
<dbReference type="Pfam" id="PF01676">
    <property type="entry name" value="Metalloenzyme"/>
    <property type="match status" value="1"/>
</dbReference>
<dbReference type="PIRSF" id="PIRSF001492">
    <property type="entry name" value="IPGAM"/>
    <property type="match status" value="1"/>
</dbReference>
<dbReference type="SUPFAM" id="SSF64158">
    <property type="entry name" value="2,3-Bisphosphoglycerate-independent phosphoglycerate mutase, substrate-binding domain"/>
    <property type="match status" value="1"/>
</dbReference>
<dbReference type="SUPFAM" id="SSF53649">
    <property type="entry name" value="Alkaline phosphatase-like"/>
    <property type="match status" value="1"/>
</dbReference>
<evidence type="ECO:0000255" key="1">
    <source>
        <dbReference type="HAMAP-Rule" id="MF_01038"/>
    </source>
</evidence>
<evidence type="ECO:0000269" key="2">
    <source>
    </source>
</evidence>
<evidence type="ECO:0000269" key="3">
    <source>
    </source>
</evidence>
<evidence type="ECO:0000269" key="4">
    <source>
    </source>
</evidence>
<evidence type="ECO:0000269" key="5">
    <source>
    </source>
</evidence>
<evidence type="ECO:0000303" key="6">
    <source>
    </source>
</evidence>
<evidence type="ECO:0000305" key="7"/>
<evidence type="ECO:0000305" key="8">
    <source>
    </source>
</evidence>
<evidence type="ECO:0000305" key="9">
    <source>
    </source>
</evidence>
<evidence type="ECO:0007829" key="10">
    <source>
        <dbReference type="PDB" id="1EJJ"/>
    </source>
</evidence>
<evidence type="ECO:0007829" key="11">
    <source>
        <dbReference type="PDB" id="1O98"/>
    </source>
</evidence>
<protein>
    <recommendedName>
        <fullName evidence="6">2,3-bisphosphoglycerate-independent phosphoglycerate mutase</fullName>
        <shortName evidence="6">23PGA-independent</shortName>
        <shortName evidence="6">BPG-independent PGAM</shortName>
        <shortName evidence="6">Phosphoglyceromutase</shortName>
        <shortName evidence="6">iPGM</shortName>
        <ecNumber evidence="2">5.4.2.12</ecNumber>
    </recommendedName>
</protein>
<name>GPMI_GEOSE</name>
<proteinExistence type="evidence at protein level"/>
<organism>
    <name type="scientific">Geobacillus stearothermophilus</name>
    <name type="common">Bacillus stearothermophilus</name>
    <dbReference type="NCBI Taxonomy" id="1422"/>
    <lineage>
        <taxon>Bacteria</taxon>
        <taxon>Bacillati</taxon>
        <taxon>Bacillota</taxon>
        <taxon>Bacilli</taxon>
        <taxon>Bacillales</taxon>
        <taxon>Anoxybacillaceae</taxon>
        <taxon>Geobacillus</taxon>
    </lineage>
</organism>
<gene>
    <name evidence="1" type="primary">gpmI</name>
    <name type="synonym">pgm</name>
</gene>
<sequence>MSKKPVALIILDGFALRDETYGNAVAQANKPNFDRYWNEYPHTTLKACGEAVGLPEGQMGNSEVGHLNIGAGRIVYQSLTRINIAIREGEFDRNETFLAAMNHVKQHGTSLHLFGLLSDGGVHSHIHHLYALLRLAAKEGVKRVYIHGFLDGRDVGPQTAPQYIKELQEKIKEYGVGEIATLSGRYYSMDRDKRWDRVEKAYRAMVYGEGPTYRDPLECIEDSYKHGIYDEFVLPSVIVREDGRPVATIQDNDAIIFYNFRPDRAIQISNTFTNEDFREFDRGPKHPKHLFFVCLTHFSETVKGYVAFKPTNLDNTIGEVLSQHGLRQLRIAETEKYPHVTFFMSGGREEKFPGEDRILINSPKVPTYDLKPEMSAYEVTDALLKEIEADKYDAIILNYANPDMVGHSGKLEPTIKAVEAVDECLGKVVDAILAKGGIAIITADHGNADEVLTPDGKPQTAHTTNPVPVIVTKKGIKLRDGGILGDLAPTMLDLLGLPQPKEMTGKSLIVK</sequence>